<accession>Q32NP8</accession>
<feature type="chain" id="PRO_0000390738" description="Forkhead box protein C1-B">
    <location>
        <begin position="1"/>
        <end position="495"/>
    </location>
</feature>
<feature type="DNA-binding region" description="Fork-head" evidence="4">
    <location>
        <begin position="79"/>
        <end position="173"/>
    </location>
</feature>
<feature type="region of interest" description="Disordered" evidence="5">
    <location>
        <begin position="175"/>
        <end position="326"/>
    </location>
</feature>
<feature type="compositionally biased region" description="Basic and acidic residues" evidence="5">
    <location>
        <begin position="178"/>
        <end position="197"/>
    </location>
</feature>
<feature type="compositionally biased region" description="Low complexity" evidence="5">
    <location>
        <begin position="200"/>
        <end position="218"/>
    </location>
</feature>
<feature type="compositionally biased region" description="Polar residues" evidence="5">
    <location>
        <begin position="233"/>
        <end position="245"/>
    </location>
</feature>
<feature type="compositionally biased region" description="Low complexity" evidence="5">
    <location>
        <begin position="256"/>
        <end position="275"/>
    </location>
</feature>
<feature type="compositionally biased region" description="Basic residues" evidence="5">
    <location>
        <begin position="286"/>
        <end position="295"/>
    </location>
</feature>
<feature type="compositionally biased region" description="Polar residues" evidence="5">
    <location>
        <begin position="297"/>
        <end position="313"/>
    </location>
</feature>
<proteinExistence type="evidence at transcript level"/>
<sequence>MQARYSVSSPNSLGVVPYLSGEQSYYRAAAAAAAAGGGYTGMAAPMSMYSHPAHEQYQAGMARAYGPYTPQPQPKDMVKPPYSYIALITMAIQNAPDKKITLNGIYQFIMERFPFYRDNKQGWQNSIRHNLSLNECFVKVPRDDKKPGKGSYWTLDPDSYNMFENGSFLRRRRRFKKKDVSKDATKEDKERLLKEHNGSQSAAAQQQRQQQNQAQAEQDGSSQPVRIQDIKTENGTSSPPQSMSPALSAVPKIESPDSSSSMSSGSPHSIPSNRSMSLEAAESHHPHQQQHHHHSQGFSVDNIMTSLRGSPQGSGELPSPLISSSRTGIAPSLSLTYSPSQGSIYSPPCSQGSSSGGGAGTYHCNMQAMSLYSGDRSGHLTPANTPAATTVEETLPDYSITTTTSALSHGNQEHPHQGRLPSWYLNQTGDLGHLAGASYPGQQQNFHSVREMFESQRLGLNSSPVNGNSSCQMSFPPSQSLYRTSGAFVYDCSKF</sequence>
<keyword id="KW-0217">Developmental protein</keyword>
<keyword id="KW-0238">DNA-binding</keyword>
<keyword id="KW-0539">Nucleus</keyword>
<keyword id="KW-1185">Reference proteome</keyword>
<keyword id="KW-0804">Transcription</keyword>
<keyword id="KW-0805">Transcription regulation</keyword>
<reference evidence="7" key="1">
    <citation type="submission" date="2005-11" db="EMBL/GenBank/DDBJ databases">
        <authorList>
            <consortium name="NIH - Xenopus Gene Collection (XGC) project"/>
        </authorList>
    </citation>
    <scope>NUCLEOTIDE SEQUENCE [LARGE SCALE MRNA]</scope>
    <source>
        <tissue evidence="7">Neurula</tissue>
    </source>
</reference>
<dbReference type="EMBL" id="BC108535">
    <property type="protein sequence ID" value="AAI08536.1"/>
    <property type="molecule type" value="mRNA"/>
</dbReference>
<dbReference type="RefSeq" id="NP_001089846.1">
    <property type="nucleotide sequence ID" value="NM_001096377.1"/>
</dbReference>
<dbReference type="SMR" id="Q32NP8"/>
<dbReference type="DNASU" id="734912"/>
<dbReference type="GeneID" id="734912"/>
<dbReference type="KEGG" id="xla:734912"/>
<dbReference type="AGR" id="Xenbase:XB-GENE-865236"/>
<dbReference type="CTD" id="734912"/>
<dbReference type="Xenbase" id="XB-GENE-865236">
    <property type="gene designation" value="foxc1.L"/>
</dbReference>
<dbReference type="OMA" id="TSWYLNQ"/>
<dbReference type="OrthoDB" id="5954824at2759"/>
<dbReference type="Proteomes" id="UP000186698">
    <property type="component" value="Chromosome 6L"/>
</dbReference>
<dbReference type="Bgee" id="734912">
    <property type="expression patterns" value="Expressed in internal ear and 14 other cell types or tissues"/>
</dbReference>
<dbReference type="GO" id="GO:0005634">
    <property type="term" value="C:nucleus"/>
    <property type="evidence" value="ECO:0000250"/>
    <property type="project" value="UniProtKB"/>
</dbReference>
<dbReference type="GO" id="GO:0003677">
    <property type="term" value="F:DNA binding"/>
    <property type="evidence" value="ECO:0000250"/>
    <property type="project" value="UniProtKB"/>
</dbReference>
<dbReference type="GO" id="GO:0003700">
    <property type="term" value="F:DNA-binding transcription factor activity"/>
    <property type="evidence" value="ECO:0000250"/>
    <property type="project" value="UniProtKB"/>
</dbReference>
<dbReference type="GO" id="GO:0000981">
    <property type="term" value="F:DNA-binding transcription factor activity, RNA polymerase II-specific"/>
    <property type="evidence" value="ECO:0000318"/>
    <property type="project" value="GO_Central"/>
</dbReference>
<dbReference type="GO" id="GO:0000978">
    <property type="term" value="F:RNA polymerase II cis-regulatory region sequence-specific DNA binding"/>
    <property type="evidence" value="ECO:0000318"/>
    <property type="project" value="GO_Central"/>
</dbReference>
<dbReference type="GO" id="GO:0000976">
    <property type="term" value="F:transcription cis-regulatory region binding"/>
    <property type="evidence" value="ECO:0000250"/>
    <property type="project" value="UniProtKB"/>
</dbReference>
<dbReference type="GO" id="GO:0009653">
    <property type="term" value="P:anatomical structure morphogenesis"/>
    <property type="evidence" value="ECO:0000318"/>
    <property type="project" value="GO_Central"/>
</dbReference>
<dbReference type="GO" id="GO:0007155">
    <property type="term" value="P:cell adhesion"/>
    <property type="evidence" value="ECO:0000250"/>
    <property type="project" value="UniProtKB"/>
</dbReference>
<dbReference type="GO" id="GO:0030154">
    <property type="term" value="P:cell differentiation"/>
    <property type="evidence" value="ECO:0000318"/>
    <property type="project" value="GO_Central"/>
</dbReference>
<dbReference type="GO" id="GO:1990869">
    <property type="term" value="P:cellular response to chemokine"/>
    <property type="evidence" value="ECO:0000250"/>
    <property type="project" value="UniProtKB"/>
</dbReference>
<dbReference type="GO" id="GO:0070098">
    <property type="term" value="P:chemokine-mediated signaling pathway"/>
    <property type="evidence" value="ECO:0000250"/>
    <property type="project" value="UniProtKB"/>
</dbReference>
<dbReference type="GO" id="GO:0006351">
    <property type="term" value="P:DNA-templated transcription"/>
    <property type="evidence" value="ECO:0000250"/>
    <property type="project" value="UniProtKB"/>
</dbReference>
<dbReference type="GO" id="GO:0007498">
    <property type="term" value="P:mesoderm development"/>
    <property type="evidence" value="ECO:0000250"/>
    <property type="project" value="UniProtKB"/>
</dbReference>
<dbReference type="GO" id="GO:0045944">
    <property type="term" value="P:positive regulation of transcription by RNA polymerase II"/>
    <property type="evidence" value="ECO:0000250"/>
    <property type="project" value="UniProtKB"/>
</dbReference>
<dbReference type="GO" id="GO:0048793">
    <property type="term" value="P:pronephros development"/>
    <property type="evidence" value="ECO:0000250"/>
    <property type="project" value="UniProtKB"/>
</dbReference>
<dbReference type="GO" id="GO:0006355">
    <property type="term" value="P:regulation of DNA-templated transcription"/>
    <property type="evidence" value="ECO:0000250"/>
    <property type="project" value="UniProtKB"/>
</dbReference>
<dbReference type="GO" id="GO:0006357">
    <property type="term" value="P:regulation of transcription by RNA polymerase II"/>
    <property type="evidence" value="ECO:0000318"/>
    <property type="project" value="GO_Central"/>
</dbReference>
<dbReference type="CDD" id="cd20044">
    <property type="entry name" value="FH_FOXC1"/>
    <property type="match status" value="1"/>
</dbReference>
<dbReference type="FunFam" id="1.10.10.10:FF:000016">
    <property type="entry name" value="Forkhead box protein I1"/>
    <property type="match status" value="1"/>
</dbReference>
<dbReference type="Gene3D" id="1.10.10.10">
    <property type="entry name" value="Winged helix-like DNA-binding domain superfamily/Winged helix DNA-binding domain"/>
    <property type="match status" value="1"/>
</dbReference>
<dbReference type="InterPro" id="IPR001766">
    <property type="entry name" value="Fork_head_dom"/>
</dbReference>
<dbReference type="InterPro" id="IPR050211">
    <property type="entry name" value="FOX_domain-containing"/>
</dbReference>
<dbReference type="InterPro" id="IPR047391">
    <property type="entry name" value="FOXC1/C2-like_FH"/>
</dbReference>
<dbReference type="InterPro" id="IPR018122">
    <property type="entry name" value="TF_fork_head_CS_1"/>
</dbReference>
<dbReference type="InterPro" id="IPR030456">
    <property type="entry name" value="TF_fork_head_CS_2"/>
</dbReference>
<dbReference type="InterPro" id="IPR036388">
    <property type="entry name" value="WH-like_DNA-bd_sf"/>
</dbReference>
<dbReference type="InterPro" id="IPR036390">
    <property type="entry name" value="WH_DNA-bd_sf"/>
</dbReference>
<dbReference type="PANTHER" id="PTHR11829">
    <property type="entry name" value="FORKHEAD BOX PROTEIN"/>
    <property type="match status" value="1"/>
</dbReference>
<dbReference type="PANTHER" id="PTHR11829:SF68">
    <property type="entry name" value="FORKHEAD BOX PROTEIN C1"/>
    <property type="match status" value="1"/>
</dbReference>
<dbReference type="Pfam" id="PF00250">
    <property type="entry name" value="Forkhead"/>
    <property type="match status" value="1"/>
</dbReference>
<dbReference type="PRINTS" id="PR00053">
    <property type="entry name" value="FORKHEAD"/>
</dbReference>
<dbReference type="SMART" id="SM00339">
    <property type="entry name" value="FH"/>
    <property type="match status" value="1"/>
</dbReference>
<dbReference type="SUPFAM" id="SSF46785">
    <property type="entry name" value="Winged helix' DNA-binding domain"/>
    <property type="match status" value="1"/>
</dbReference>
<dbReference type="PROSITE" id="PS00657">
    <property type="entry name" value="FORK_HEAD_1"/>
    <property type="match status" value="1"/>
</dbReference>
<dbReference type="PROSITE" id="PS00658">
    <property type="entry name" value="FORK_HEAD_2"/>
    <property type="match status" value="1"/>
</dbReference>
<dbReference type="PROSITE" id="PS50039">
    <property type="entry name" value="FORK_HEAD_3"/>
    <property type="match status" value="1"/>
</dbReference>
<name>FXC1B_XENLA</name>
<evidence type="ECO:0000250" key="1">
    <source>
        <dbReference type="UniProtKB" id="Q12948"/>
    </source>
</evidence>
<evidence type="ECO:0000250" key="2">
    <source>
        <dbReference type="UniProtKB" id="Q61572"/>
    </source>
</evidence>
<evidence type="ECO:0000250" key="3">
    <source>
        <dbReference type="UniProtKB" id="Q9PVZ3"/>
    </source>
</evidence>
<evidence type="ECO:0000255" key="4">
    <source>
        <dbReference type="PROSITE-ProRule" id="PRU00089"/>
    </source>
</evidence>
<evidence type="ECO:0000256" key="5">
    <source>
        <dbReference type="SAM" id="MobiDB-lite"/>
    </source>
</evidence>
<evidence type="ECO:0000305" key="6"/>
<evidence type="ECO:0000312" key="7">
    <source>
        <dbReference type="EMBL" id="AAI08536.1"/>
    </source>
</evidence>
<comment type="function">
    <text evidence="1 2 3">DNA-binding transcriptional factor that plays a role in a broad range of cellular and developmental processes such as eye, bones, cardiovascular, kidney and skin development. Acts either as a transcriptional activator or repressor. Binds to the consensus binding site 5'-[G/C][A/T]AAA[T/C]AA[A/C]-3' in promoter of target genes. Upon DNA-binding, promotes DNA bending. Required for cell viability and resistance to oxidative stress in the eye. Promotes cell growth inhibition by stopping the cell cycle in the G1 phase through TGFB1-mediated signals. Involved in epithelial-mesenchymal transition (EMT) induction by increasing cell proliferation, migration and invasion. Involved in chemokine-induced endothelial cell migration. Plays a role in epidermal keratinocyte terminal differentiation. Essential developmental transcriptional factor required for mesoderm-derived tissues formation, such as the somites, skin, bone and cartilage. Plays a role in the development and maintenance of mesenchymal niches for haematopoietic stem and progenitor cells (HSPC). Plays a role in corneal transparency by preventing both blood vessel and lymphatic vessel growth during embryonic development in a VEGF-dependent manner. Plays a role at the gastrula stage for expression of several mesodermal and endodermal genes. At the late neurula stage, regulates expression of adhesion genes to maintain cell adhesion in the mesodermal germ layer.</text>
</comment>
<comment type="subunit">
    <text evidence="6">Monomer.</text>
</comment>
<comment type="subcellular location">
    <subcellularLocation>
        <location evidence="2">Nucleus</location>
    </subcellularLocation>
</comment>
<gene>
    <name type="primary">foxc1-b</name>
    <name type="synonym">foxc1</name>
</gene>
<protein>
    <recommendedName>
        <fullName>Forkhead box protein C1-B</fullName>
    </recommendedName>
</protein>
<organism>
    <name type="scientific">Xenopus laevis</name>
    <name type="common">African clawed frog</name>
    <dbReference type="NCBI Taxonomy" id="8355"/>
    <lineage>
        <taxon>Eukaryota</taxon>
        <taxon>Metazoa</taxon>
        <taxon>Chordata</taxon>
        <taxon>Craniata</taxon>
        <taxon>Vertebrata</taxon>
        <taxon>Euteleostomi</taxon>
        <taxon>Amphibia</taxon>
        <taxon>Batrachia</taxon>
        <taxon>Anura</taxon>
        <taxon>Pipoidea</taxon>
        <taxon>Pipidae</taxon>
        <taxon>Xenopodinae</taxon>
        <taxon>Xenopus</taxon>
        <taxon>Xenopus</taxon>
    </lineage>
</organism>